<comment type="function">
    <text evidence="1">Catalyzes the complicated ring closure reaction between the two acyclic compounds 1-deoxy-D-xylulose-5-phosphate (DXP) and 3-amino-2-oxopropyl phosphate (1-amino-acetone-3-phosphate or AAP) to form pyridoxine 5'-phosphate (PNP) and inorganic phosphate.</text>
</comment>
<comment type="catalytic activity">
    <reaction evidence="1">
        <text>3-amino-2-oxopropyl phosphate + 1-deoxy-D-xylulose 5-phosphate = pyridoxine 5'-phosphate + phosphate + 2 H2O + H(+)</text>
        <dbReference type="Rhea" id="RHEA:15265"/>
        <dbReference type="ChEBI" id="CHEBI:15377"/>
        <dbReference type="ChEBI" id="CHEBI:15378"/>
        <dbReference type="ChEBI" id="CHEBI:43474"/>
        <dbReference type="ChEBI" id="CHEBI:57279"/>
        <dbReference type="ChEBI" id="CHEBI:57792"/>
        <dbReference type="ChEBI" id="CHEBI:58589"/>
        <dbReference type="EC" id="2.6.99.2"/>
    </reaction>
</comment>
<comment type="pathway">
    <text evidence="1">Cofactor biosynthesis; pyridoxine 5'-phosphate biosynthesis; pyridoxine 5'-phosphate from D-erythrose 4-phosphate: step 5/5.</text>
</comment>
<comment type="subunit">
    <text evidence="1">Homooctamer; tetramer of dimers.</text>
</comment>
<comment type="subcellular location">
    <subcellularLocation>
        <location evidence="1">Cytoplasm</location>
    </subcellularLocation>
</comment>
<comment type="similarity">
    <text evidence="1">Belongs to the PNP synthase family.</text>
</comment>
<evidence type="ECO:0000255" key="1">
    <source>
        <dbReference type="HAMAP-Rule" id="MF_00279"/>
    </source>
</evidence>
<reference key="1">
    <citation type="journal article" date="2003" name="Genome Res.">
        <title>Comparative genome analysis of Vibrio vulnificus, a marine pathogen.</title>
        <authorList>
            <person name="Chen C.-Y."/>
            <person name="Wu K.-M."/>
            <person name="Chang Y.-C."/>
            <person name="Chang C.-H."/>
            <person name="Tsai H.-C."/>
            <person name="Liao T.-L."/>
            <person name="Liu Y.-M."/>
            <person name="Chen H.-J."/>
            <person name="Shen A.B.-T."/>
            <person name="Li J.-C."/>
            <person name="Su T.-L."/>
            <person name="Shao C.-P."/>
            <person name="Lee C.-T."/>
            <person name="Hor L.-I."/>
            <person name="Tsai S.-F."/>
        </authorList>
    </citation>
    <scope>NUCLEOTIDE SEQUENCE [LARGE SCALE GENOMIC DNA]</scope>
    <source>
        <strain>YJ016</strain>
    </source>
</reference>
<keyword id="KW-0963">Cytoplasm</keyword>
<keyword id="KW-0664">Pyridoxine biosynthesis</keyword>
<keyword id="KW-0808">Transferase</keyword>
<feature type="chain" id="PRO_0000190138" description="Pyridoxine 5'-phosphate synthase">
    <location>
        <begin position="1"/>
        <end position="243"/>
    </location>
</feature>
<feature type="active site" description="Proton acceptor" evidence="1">
    <location>
        <position position="45"/>
    </location>
</feature>
<feature type="active site" description="Proton acceptor" evidence="1">
    <location>
        <position position="72"/>
    </location>
</feature>
<feature type="active site" description="Proton donor" evidence="1">
    <location>
        <position position="193"/>
    </location>
</feature>
<feature type="binding site" evidence="1">
    <location>
        <position position="9"/>
    </location>
    <ligand>
        <name>3-amino-2-oxopropyl phosphate</name>
        <dbReference type="ChEBI" id="CHEBI:57279"/>
    </ligand>
</feature>
<feature type="binding site" evidence="1">
    <location>
        <begin position="11"/>
        <end position="12"/>
    </location>
    <ligand>
        <name>1-deoxy-D-xylulose 5-phosphate</name>
        <dbReference type="ChEBI" id="CHEBI:57792"/>
    </ligand>
</feature>
<feature type="binding site" evidence="1">
    <location>
        <position position="20"/>
    </location>
    <ligand>
        <name>3-amino-2-oxopropyl phosphate</name>
        <dbReference type="ChEBI" id="CHEBI:57279"/>
    </ligand>
</feature>
<feature type="binding site" evidence="1">
    <location>
        <position position="47"/>
    </location>
    <ligand>
        <name>1-deoxy-D-xylulose 5-phosphate</name>
        <dbReference type="ChEBI" id="CHEBI:57792"/>
    </ligand>
</feature>
<feature type="binding site" evidence="1">
    <location>
        <position position="52"/>
    </location>
    <ligand>
        <name>1-deoxy-D-xylulose 5-phosphate</name>
        <dbReference type="ChEBI" id="CHEBI:57792"/>
    </ligand>
</feature>
<feature type="binding site" evidence="1">
    <location>
        <position position="102"/>
    </location>
    <ligand>
        <name>1-deoxy-D-xylulose 5-phosphate</name>
        <dbReference type="ChEBI" id="CHEBI:57792"/>
    </ligand>
</feature>
<feature type="binding site" evidence="1">
    <location>
        <position position="194"/>
    </location>
    <ligand>
        <name>3-amino-2-oxopropyl phosphate</name>
        <dbReference type="ChEBI" id="CHEBI:57279"/>
    </ligand>
</feature>
<feature type="binding site" evidence="1">
    <location>
        <begin position="215"/>
        <end position="216"/>
    </location>
    <ligand>
        <name>3-amino-2-oxopropyl phosphate</name>
        <dbReference type="ChEBI" id="CHEBI:57279"/>
    </ligand>
</feature>
<feature type="site" description="Transition state stabilizer" evidence="1">
    <location>
        <position position="153"/>
    </location>
</feature>
<name>PDXJ_VIBVY</name>
<proteinExistence type="inferred from homology"/>
<dbReference type="EC" id="2.6.99.2" evidence="1"/>
<dbReference type="EMBL" id="BA000037">
    <property type="protein sequence ID" value="BAC95592.1"/>
    <property type="molecule type" value="Genomic_DNA"/>
</dbReference>
<dbReference type="RefSeq" id="WP_011079503.1">
    <property type="nucleotide sequence ID" value="NC_005139.1"/>
</dbReference>
<dbReference type="SMR" id="Q7MHP1"/>
<dbReference type="STRING" id="672.VV93_v1c25370"/>
<dbReference type="GeneID" id="93895825"/>
<dbReference type="KEGG" id="vvy:VV2828"/>
<dbReference type="eggNOG" id="COG0854">
    <property type="taxonomic scope" value="Bacteria"/>
</dbReference>
<dbReference type="HOGENOM" id="CLU_074563_0_0_6"/>
<dbReference type="UniPathway" id="UPA00244">
    <property type="reaction ID" value="UER00313"/>
</dbReference>
<dbReference type="Proteomes" id="UP000002675">
    <property type="component" value="Chromosome I"/>
</dbReference>
<dbReference type="GO" id="GO:0005829">
    <property type="term" value="C:cytosol"/>
    <property type="evidence" value="ECO:0007669"/>
    <property type="project" value="TreeGrafter"/>
</dbReference>
<dbReference type="GO" id="GO:0033856">
    <property type="term" value="F:pyridoxine 5'-phosphate synthase activity"/>
    <property type="evidence" value="ECO:0007669"/>
    <property type="project" value="UniProtKB-EC"/>
</dbReference>
<dbReference type="GO" id="GO:0008615">
    <property type="term" value="P:pyridoxine biosynthetic process"/>
    <property type="evidence" value="ECO:0007669"/>
    <property type="project" value="UniProtKB-UniRule"/>
</dbReference>
<dbReference type="CDD" id="cd00003">
    <property type="entry name" value="PNPsynthase"/>
    <property type="match status" value="1"/>
</dbReference>
<dbReference type="FunFam" id="3.20.20.70:FF:000042">
    <property type="entry name" value="Pyridoxine 5'-phosphate synthase"/>
    <property type="match status" value="1"/>
</dbReference>
<dbReference type="Gene3D" id="3.20.20.70">
    <property type="entry name" value="Aldolase class I"/>
    <property type="match status" value="1"/>
</dbReference>
<dbReference type="HAMAP" id="MF_00279">
    <property type="entry name" value="PdxJ"/>
    <property type="match status" value="1"/>
</dbReference>
<dbReference type="InterPro" id="IPR013785">
    <property type="entry name" value="Aldolase_TIM"/>
</dbReference>
<dbReference type="InterPro" id="IPR004569">
    <property type="entry name" value="PyrdxlP_synth_PdxJ"/>
</dbReference>
<dbReference type="InterPro" id="IPR036130">
    <property type="entry name" value="Pyridoxine-5'_phos_synth"/>
</dbReference>
<dbReference type="NCBIfam" id="TIGR00559">
    <property type="entry name" value="pdxJ"/>
    <property type="match status" value="1"/>
</dbReference>
<dbReference type="NCBIfam" id="NF003623">
    <property type="entry name" value="PRK05265.1-1"/>
    <property type="match status" value="1"/>
</dbReference>
<dbReference type="NCBIfam" id="NF003624">
    <property type="entry name" value="PRK05265.1-2"/>
    <property type="match status" value="1"/>
</dbReference>
<dbReference type="NCBIfam" id="NF003625">
    <property type="entry name" value="PRK05265.1-3"/>
    <property type="match status" value="1"/>
</dbReference>
<dbReference type="NCBIfam" id="NF003627">
    <property type="entry name" value="PRK05265.1-5"/>
    <property type="match status" value="1"/>
</dbReference>
<dbReference type="PANTHER" id="PTHR30456">
    <property type="entry name" value="PYRIDOXINE 5'-PHOSPHATE SYNTHASE"/>
    <property type="match status" value="1"/>
</dbReference>
<dbReference type="PANTHER" id="PTHR30456:SF0">
    <property type="entry name" value="PYRIDOXINE 5'-PHOSPHATE SYNTHASE"/>
    <property type="match status" value="1"/>
</dbReference>
<dbReference type="Pfam" id="PF03740">
    <property type="entry name" value="PdxJ"/>
    <property type="match status" value="1"/>
</dbReference>
<dbReference type="SUPFAM" id="SSF63892">
    <property type="entry name" value="Pyridoxine 5'-phosphate synthase"/>
    <property type="match status" value="1"/>
</dbReference>
<sequence length="243" mass="26306">MSSIYLGVNIDHVATLRNARGTKYPDPVHAAEVAERAGADGITIHLREDRRHITDRDVRILRETLQTRMNLEMAVTDEMIEIALKTQPEYVCLVPEKREELTTEGGLDVAGHLDKIKAATEKLTAAGIKVSLFIDADREQIDAAKACGAPFIELHTGHYADAATEADQLDELKKIAAGASYAADLGITVNAGHGLTYHNVAPIAALPEIYELNIGHAIIGRAVFDGLHKAVADMKAIMVAARQ</sequence>
<gene>
    <name evidence="1" type="primary">pdxJ</name>
    <name type="ordered locus">VV2828</name>
</gene>
<accession>Q7MHP1</accession>
<protein>
    <recommendedName>
        <fullName evidence="1">Pyridoxine 5'-phosphate synthase</fullName>
        <shortName evidence="1">PNP synthase</shortName>
        <ecNumber evidence="1">2.6.99.2</ecNumber>
    </recommendedName>
</protein>
<organism>
    <name type="scientific">Vibrio vulnificus (strain YJ016)</name>
    <dbReference type="NCBI Taxonomy" id="196600"/>
    <lineage>
        <taxon>Bacteria</taxon>
        <taxon>Pseudomonadati</taxon>
        <taxon>Pseudomonadota</taxon>
        <taxon>Gammaproteobacteria</taxon>
        <taxon>Vibrionales</taxon>
        <taxon>Vibrionaceae</taxon>
        <taxon>Vibrio</taxon>
    </lineage>
</organism>